<feature type="chain" id="PRO_0000277306" description="Acetolactate synthase large subunit">
    <location>
        <begin position="1"/>
        <end position="590"/>
    </location>
</feature>
<feature type="region of interest" description="Thiamine pyrophosphate binding">
    <location>
        <begin position="405"/>
        <end position="484"/>
    </location>
</feature>
<feature type="binding site" evidence="1">
    <location>
        <position position="61"/>
    </location>
    <ligand>
        <name>thiamine diphosphate</name>
        <dbReference type="ChEBI" id="CHEBI:58937"/>
    </ligand>
</feature>
<feature type="binding site" evidence="1">
    <location>
        <position position="163"/>
    </location>
    <ligand>
        <name>FAD</name>
        <dbReference type="ChEBI" id="CHEBI:57692"/>
    </ligand>
</feature>
<feature type="binding site" evidence="1">
    <location>
        <begin position="271"/>
        <end position="292"/>
    </location>
    <ligand>
        <name>FAD</name>
        <dbReference type="ChEBI" id="CHEBI:57692"/>
    </ligand>
</feature>
<feature type="binding site" evidence="1">
    <location>
        <begin position="314"/>
        <end position="333"/>
    </location>
    <ligand>
        <name>FAD</name>
        <dbReference type="ChEBI" id="CHEBI:57692"/>
    </ligand>
</feature>
<feature type="binding site" evidence="1">
    <location>
        <position position="455"/>
    </location>
    <ligand>
        <name>Mg(2+)</name>
        <dbReference type="ChEBI" id="CHEBI:18420"/>
    </ligand>
</feature>
<feature type="binding site" evidence="1">
    <location>
        <position position="482"/>
    </location>
    <ligand>
        <name>Mg(2+)</name>
        <dbReference type="ChEBI" id="CHEBI:18420"/>
    </ligand>
</feature>
<gene>
    <name type="primary">ilvB</name>
</gene>
<accession>Q1XDF6</accession>
<evidence type="ECO:0000250" key="1"/>
<evidence type="ECO:0000305" key="2"/>
<protein>
    <recommendedName>
        <fullName>Acetolactate synthase large subunit</fullName>
        <shortName>AHAS</shortName>
        <ecNumber>2.2.1.6</ecNumber>
    </recommendedName>
    <alternativeName>
        <fullName>Acetohydroxy-acid synthase large subunit</fullName>
        <shortName>ALS</shortName>
    </alternativeName>
</protein>
<proteinExistence type="inferred from homology"/>
<comment type="catalytic activity">
    <reaction>
        <text>2 pyruvate + H(+) = (2S)-2-acetolactate + CO2</text>
        <dbReference type="Rhea" id="RHEA:25249"/>
        <dbReference type="ChEBI" id="CHEBI:15361"/>
        <dbReference type="ChEBI" id="CHEBI:15378"/>
        <dbReference type="ChEBI" id="CHEBI:16526"/>
        <dbReference type="ChEBI" id="CHEBI:58476"/>
        <dbReference type="EC" id="2.2.1.6"/>
    </reaction>
</comment>
<comment type="cofactor">
    <cofactor evidence="1">
        <name>Mg(2+)</name>
        <dbReference type="ChEBI" id="CHEBI:18420"/>
    </cofactor>
    <text evidence="1">Binds 1 Mg(2+) ion per subunit.</text>
</comment>
<comment type="cofactor">
    <cofactor evidence="1">
        <name>thiamine diphosphate</name>
        <dbReference type="ChEBI" id="CHEBI:58937"/>
    </cofactor>
    <text evidence="1">Binds 1 thiamine pyrophosphate per subunit.</text>
</comment>
<comment type="pathway">
    <text>Amino-acid biosynthesis; L-isoleucine biosynthesis; L-isoleucine from 2-oxobutanoate: step 1/4.</text>
</comment>
<comment type="pathway">
    <text>Amino-acid biosynthesis; L-valine biosynthesis; L-valine from pyruvate: step 1/4.</text>
</comment>
<comment type="subunit">
    <text evidence="1">Dimer of large and small chains.</text>
</comment>
<comment type="subcellular location">
    <subcellularLocation>
        <location>Plastid</location>
        <location>Chloroplast</location>
    </subcellularLocation>
</comment>
<comment type="similarity">
    <text evidence="2">Belongs to the TPP enzyme family.</text>
</comment>
<geneLocation type="chloroplast"/>
<keyword id="KW-0028">Amino-acid biosynthesis</keyword>
<keyword id="KW-0100">Branched-chain amino acid biosynthesis</keyword>
<keyword id="KW-0150">Chloroplast</keyword>
<keyword id="KW-0274">FAD</keyword>
<keyword id="KW-0285">Flavoprotein</keyword>
<keyword id="KW-0460">Magnesium</keyword>
<keyword id="KW-0479">Metal-binding</keyword>
<keyword id="KW-0934">Plastid</keyword>
<keyword id="KW-0786">Thiamine pyrophosphate</keyword>
<keyword id="KW-0808">Transferase</keyword>
<name>ILVB_PYRYE</name>
<organism>
    <name type="scientific">Pyropia yezoensis</name>
    <name type="common">Susabi-nori</name>
    <name type="synonym">Porphyra yezoensis</name>
    <dbReference type="NCBI Taxonomy" id="2788"/>
    <lineage>
        <taxon>Eukaryota</taxon>
        <taxon>Rhodophyta</taxon>
        <taxon>Bangiophyceae</taxon>
        <taxon>Bangiales</taxon>
        <taxon>Bangiaceae</taxon>
        <taxon>Pyropia</taxon>
    </lineage>
</organism>
<sequence length="590" mass="64684">MPLKQRVSSEKTGAFALLDSIVRHGVKHIFGYPGGAILPIYDELYAWEEASLIKHILVRHEQGAAHAADSYSRSTGEVGVCFATSGPGATNLVSGIATAHIDSVPILAITGQVGRAFIGTDAFQEVDIFGITLPIVKHSYVVRDPRDMSRIVAEAFFICKHGRPGPVLIDVPKDVGLEKFNYFSVEPGKVNIPGCRPITSLKSRQILMAAKMIQQSSQPLLYIGGGAIISDSHQIIKELVDFYKIPVTTTLMGKGIFNEDSDYCLGMLGMHGTAYANFAVSECDLLIALGARFDDRVTGKLDEFACNAQVIHVDIDPAEVGKNRIPQVAIVGDVAEVVSEILNLLKTSFPPYPEQIISWQERINRWRQQYPLLVPRKSTSISPQVILVATNKLAQNAYFTTDVGQHQMWSAQFLKVKAKHWLSSAGLGTMGYGLPAAIGAQVAHPNDVVICISGDSSFQMNMQELGTIAQYQLPVKIIIINNRWQGMVRQWQQAFYGERYSHSRMTEGAPDFQKLAEAFGIKAFTINNRQNMQSALQVAIDYPGPVLLDCQVTENENCYPMVAPGKSNAQMIGIAKPQRGTASNYINNSV</sequence>
<dbReference type="EC" id="2.2.1.6"/>
<dbReference type="EMBL" id="AP006715">
    <property type="protein sequence ID" value="BAE92455.1"/>
    <property type="molecule type" value="Genomic_DNA"/>
</dbReference>
<dbReference type="RefSeq" id="YP_537012.1">
    <property type="nucleotide sequence ID" value="NC_007932.1"/>
</dbReference>
<dbReference type="SMR" id="Q1XDF6"/>
<dbReference type="GeneID" id="3978889"/>
<dbReference type="UniPathway" id="UPA00047">
    <property type="reaction ID" value="UER00055"/>
</dbReference>
<dbReference type="UniPathway" id="UPA00049">
    <property type="reaction ID" value="UER00059"/>
</dbReference>
<dbReference type="GO" id="GO:0005948">
    <property type="term" value="C:acetolactate synthase complex"/>
    <property type="evidence" value="ECO:0007669"/>
    <property type="project" value="TreeGrafter"/>
</dbReference>
<dbReference type="GO" id="GO:0009507">
    <property type="term" value="C:chloroplast"/>
    <property type="evidence" value="ECO:0007669"/>
    <property type="project" value="UniProtKB-SubCell"/>
</dbReference>
<dbReference type="GO" id="GO:0003984">
    <property type="term" value="F:acetolactate synthase activity"/>
    <property type="evidence" value="ECO:0007669"/>
    <property type="project" value="UniProtKB-EC"/>
</dbReference>
<dbReference type="GO" id="GO:0050660">
    <property type="term" value="F:flavin adenine dinucleotide binding"/>
    <property type="evidence" value="ECO:0007669"/>
    <property type="project" value="InterPro"/>
</dbReference>
<dbReference type="GO" id="GO:0000287">
    <property type="term" value="F:magnesium ion binding"/>
    <property type="evidence" value="ECO:0007669"/>
    <property type="project" value="InterPro"/>
</dbReference>
<dbReference type="GO" id="GO:0030976">
    <property type="term" value="F:thiamine pyrophosphate binding"/>
    <property type="evidence" value="ECO:0007669"/>
    <property type="project" value="InterPro"/>
</dbReference>
<dbReference type="GO" id="GO:0009097">
    <property type="term" value="P:isoleucine biosynthetic process"/>
    <property type="evidence" value="ECO:0007669"/>
    <property type="project" value="UniProtKB-UniPathway"/>
</dbReference>
<dbReference type="GO" id="GO:0009099">
    <property type="term" value="P:L-valine biosynthetic process"/>
    <property type="evidence" value="ECO:0007669"/>
    <property type="project" value="UniProtKB-UniPathway"/>
</dbReference>
<dbReference type="CDD" id="cd02015">
    <property type="entry name" value="TPP_AHAS"/>
    <property type="match status" value="1"/>
</dbReference>
<dbReference type="CDD" id="cd07035">
    <property type="entry name" value="TPP_PYR_POX_like"/>
    <property type="match status" value="1"/>
</dbReference>
<dbReference type="FunFam" id="3.40.50.1220:FF:000008">
    <property type="entry name" value="Acetolactate synthase"/>
    <property type="match status" value="1"/>
</dbReference>
<dbReference type="FunFam" id="3.40.50.970:FF:000007">
    <property type="entry name" value="Acetolactate synthase"/>
    <property type="match status" value="1"/>
</dbReference>
<dbReference type="FunFam" id="3.40.50.970:FF:000016">
    <property type="entry name" value="Acetolactate synthase"/>
    <property type="match status" value="1"/>
</dbReference>
<dbReference type="Gene3D" id="3.40.50.970">
    <property type="match status" value="2"/>
</dbReference>
<dbReference type="Gene3D" id="3.40.50.1220">
    <property type="entry name" value="TPP-binding domain"/>
    <property type="match status" value="1"/>
</dbReference>
<dbReference type="InterPro" id="IPR012846">
    <property type="entry name" value="Acetolactate_synth_lsu"/>
</dbReference>
<dbReference type="InterPro" id="IPR039368">
    <property type="entry name" value="AHAS_TPP"/>
</dbReference>
<dbReference type="InterPro" id="IPR029035">
    <property type="entry name" value="DHS-like_NAD/FAD-binding_dom"/>
</dbReference>
<dbReference type="InterPro" id="IPR029061">
    <property type="entry name" value="THDP-binding"/>
</dbReference>
<dbReference type="InterPro" id="IPR012000">
    <property type="entry name" value="Thiamin_PyroP_enz_cen_dom"/>
</dbReference>
<dbReference type="InterPro" id="IPR012001">
    <property type="entry name" value="Thiamin_PyroP_enz_TPP-bd_dom"/>
</dbReference>
<dbReference type="InterPro" id="IPR000399">
    <property type="entry name" value="TPP-bd_CS"/>
</dbReference>
<dbReference type="InterPro" id="IPR045229">
    <property type="entry name" value="TPP_enz"/>
</dbReference>
<dbReference type="InterPro" id="IPR011766">
    <property type="entry name" value="TPP_enzyme_TPP-bd"/>
</dbReference>
<dbReference type="NCBIfam" id="TIGR00118">
    <property type="entry name" value="acolac_lg"/>
    <property type="match status" value="1"/>
</dbReference>
<dbReference type="NCBIfam" id="NF005651">
    <property type="entry name" value="PRK07418.1"/>
    <property type="match status" value="1"/>
</dbReference>
<dbReference type="PANTHER" id="PTHR18968:SF13">
    <property type="entry name" value="ACETOLACTATE SYNTHASE CATALYTIC SUBUNIT, MITOCHONDRIAL"/>
    <property type="match status" value="1"/>
</dbReference>
<dbReference type="PANTHER" id="PTHR18968">
    <property type="entry name" value="THIAMINE PYROPHOSPHATE ENZYMES"/>
    <property type="match status" value="1"/>
</dbReference>
<dbReference type="Pfam" id="PF02775">
    <property type="entry name" value="TPP_enzyme_C"/>
    <property type="match status" value="1"/>
</dbReference>
<dbReference type="Pfam" id="PF00205">
    <property type="entry name" value="TPP_enzyme_M"/>
    <property type="match status" value="1"/>
</dbReference>
<dbReference type="Pfam" id="PF02776">
    <property type="entry name" value="TPP_enzyme_N"/>
    <property type="match status" value="1"/>
</dbReference>
<dbReference type="SUPFAM" id="SSF52467">
    <property type="entry name" value="DHS-like NAD/FAD-binding domain"/>
    <property type="match status" value="1"/>
</dbReference>
<dbReference type="SUPFAM" id="SSF52518">
    <property type="entry name" value="Thiamin diphosphate-binding fold (THDP-binding)"/>
    <property type="match status" value="2"/>
</dbReference>
<dbReference type="PROSITE" id="PS00187">
    <property type="entry name" value="TPP_ENZYMES"/>
    <property type="match status" value="1"/>
</dbReference>
<reference key="1">
    <citation type="submission" date="2003-11" db="EMBL/GenBank/DDBJ databases">
        <title>Whole genome sequence of Porphyra yezoensis chloroplast.</title>
        <authorList>
            <person name="Kunimoto M."/>
            <person name="Morishima K."/>
            <person name="Yoshikawa M."/>
            <person name="Fukuda S."/>
            <person name="Kobayashi T."/>
            <person name="Kobayashi M."/>
            <person name="Okazaki T."/>
            <person name="Ohara I."/>
            <person name="Nakayama I."/>
        </authorList>
    </citation>
    <scope>NUCLEOTIDE SEQUENCE [LARGE SCALE GENOMIC DNA]</scope>
    <source>
        <strain>U-51</strain>
    </source>
</reference>